<keyword id="KW-0119">Carbohydrate metabolism</keyword>
<keyword id="KW-0413">Isomerase</keyword>
<keyword id="KW-0521">NADP</keyword>
<dbReference type="EC" id="5.1.3.20" evidence="1"/>
<dbReference type="EMBL" id="AM933172">
    <property type="protein sequence ID" value="CAR35111.1"/>
    <property type="molecule type" value="Genomic_DNA"/>
</dbReference>
<dbReference type="SMR" id="B5R5E3"/>
<dbReference type="KEGG" id="set:SEN3532"/>
<dbReference type="HOGENOM" id="CLU_007383_1_3_6"/>
<dbReference type="UniPathway" id="UPA00356">
    <property type="reaction ID" value="UER00440"/>
</dbReference>
<dbReference type="Proteomes" id="UP000000613">
    <property type="component" value="Chromosome"/>
</dbReference>
<dbReference type="GO" id="GO:0008712">
    <property type="term" value="F:ADP-glyceromanno-heptose 6-epimerase activity"/>
    <property type="evidence" value="ECO:0007669"/>
    <property type="project" value="UniProtKB-UniRule"/>
</dbReference>
<dbReference type="GO" id="GO:0050661">
    <property type="term" value="F:NADP binding"/>
    <property type="evidence" value="ECO:0007669"/>
    <property type="project" value="InterPro"/>
</dbReference>
<dbReference type="GO" id="GO:0097171">
    <property type="term" value="P:ADP-L-glycero-beta-D-manno-heptose biosynthetic process"/>
    <property type="evidence" value="ECO:0007669"/>
    <property type="project" value="UniProtKB-UniPathway"/>
</dbReference>
<dbReference type="GO" id="GO:0005975">
    <property type="term" value="P:carbohydrate metabolic process"/>
    <property type="evidence" value="ECO:0007669"/>
    <property type="project" value="UniProtKB-UniRule"/>
</dbReference>
<dbReference type="CDD" id="cd05248">
    <property type="entry name" value="ADP_GME_SDR_e"/>
    <property type="match status" value="1"/>
</dbReference>
<dbReference type="Gene3D" id="3.40.50.720">
    <property type="entry name" value="NAD(P)-binding Rossmann-like Domain"/>
    <property type="match status" value="1"/>
</dbReference>
<dbReference type="Gene3D" id="3.90.25.10">
    <property type="entry name" value="UDP-galactose 4-epimerase, domain 1"/>
    <property type="match status" value="1"/>
</dbReference>
<dbReference type="HAMAP" id="MF_01601">
    <property type="entry name" value="Heptose_epimerase"/>
    <property type="match status" value="1"/>
</dbReference>
<dbReference type="InterPro" id="IPR001509">
    <property type="entry name" value="Epimerase_deHydtase"/>
</dbReference>
<dbReference type="InterPro" id="IPR011912">
    <property type="entry name" value="Heptose_epim"/>
</dbReference>
<dbReference type="InterPro" id="IPR036291">
    <property type="entry name" value="NAD(P)-bd_dom_sf"/>
</dbReference>
<dbReference type="NCBIfam" id="TIGR02197">
    <property type="entry name" value="heptose_epim"/>
    <property type="match status" value="1"/>
</dbReference>
<dbReference type="NCBIfam" id="NF008360">
    <property type="entry name" value="PRK11150.1"/>
    <property type="match status" value="1"/>
</dbReference>
<dbReference type="PANTHER" id="PTHR43103:SF3">
    <property type="entry name" value="ADP-L-GLYCERO-D-MANNO-HEPTOSE-6-EPIMERASE"/>
    <property type="match status" value="1"/>
</dbReference>
<dbReference type="PANTHER" id="PTHR43103">
    <property type="entry name" value="NUCLEOSIDE-DIPHOSPHATE-SUGAR EPIMERASE"/>
    <property type="match status" value="1"/>
</dbReference>
<dbReference type="Pfam" id="PF01370">
    <property type="entry name" value="Epimerase"/>
    <property type="match status" value="1"/>
</dbReference>
<dbReference type="SUPFAM" id="SSF51735">
    <property type="entry name" value="NAD(P)-binding Rossmann-fold domains"/>
    <property type="match status" value="1"/>
</dbReference>
<accession>B5R5E3</accession>
<proteinExistence type="inferred from homology"/>
<evidence type="ECO:0000255" key="1">
    <source>
        <dbReference type="HAMAP-Rule" id="MF_01601"/>
    </source>
</evidence>
<protein>
    <recommendedName>
        <fullName evidence="1">ADP-L-glycero-D-manno-heptose-6-epimerase</fullName>
        <ecNumber evidence="1">5.1.3.20</ecNumber>
    </recommendedName>
    <alternativeName>
        <fullName evidence="1">ADP-L-glycero-beta-D-manno-heptose-6-epimerase</fullName>
        <shortName evidence="1">ADP-glyceromanno-heptose 6-epimerase</shortName>
        <shortName evidence="1">ADP-hep 6-epimerase</shortName>
        <shortName evidence="1">AGME</shortName>
    </alternativeName>
</protein>
<reference key="1">
    <citation type="journal article" date="2008" name="Genome Res.">
        <title>Comparative genome analysis of Salmonella enteritidis PT4 and Salmonella gallinarum 287/91 provides insights into evolutionary and host adaptation pathways.</title>
        <authorList>
            <person name="Thomson N.R."/>
            <person name="Clayton D.J."/>
            <person name="Windhorst D."/>
            <person name="Vernikos G."/>
            <person name="Davidson S."/>
            <person name="Churcher C."/>
            <person name="Quail M.A."/>
            <person name="Stevens M."/>
            <person name="Jones M.A."/>
            <person name="Watson M."/>
            <person name="Barron A."/>
            <person name="Layton A."/>
            <person name="Pickard D."/>
            <person name="Kingsley R.A."/>
            <person name="Bignell A."/>
            <person name="Clark L."/>
            <person name="Harris B."/>
            <person name="Ormond D."/>
            <person name="Abdellah Z."/>
            <person name="Brooks K."/>
            <person name="Cherevach I."/>
            <person name="Chillingworth T."/>
            <person name="Woodward J."/>
            <person name="Norberczak H."/>
            <person name="Lord A."/>
            <person name="Arrowsmith C."/>
            <person name="Jagels K."/>
            <person name="Moule S."/>
            <person name="Mungall K."/>
            <person name="Saunders M."/>
            <person name="Whitehead S."/>
            <person name="Chabalgoity J.A."/>
            <person name="Maskell D."/>
            <person name="Humphreys T."/>
            <person name="Roberts M."/>
            <person name="Barrow P.A."/>
            <person name="Dougan G."/>
            <person name="Parkhill J."/>
        </authorList>
    </citation>
    <scope>NUCLEOTIDE SEQUENCE [LARGE SCALE GENOMIC DNA]</scope>
    <source>
        <strain>P125109</strain>
    </source>
</reference>
<sequence>MIIVTGGAGFIGSNIVKALNDKGITDILVVDNLKDGTKFVNLVDLNIADYMDKEDFLIQIMSGEELGDIEAIFHEGACSSTTEWDGKYMMDNNYQYSKELLHYCLEREIPFLYASSAATYGGRTSDFIESREYEKPLNVYGYSKFLFDEYVRQILPEANSQIVGFRYFNVYGPREGHKGSMASVAFHLNTQLNNGESPKLFEGSENFKRDFVYVGDVAAVNLWFLESGKSGIFNLGTGRAESFQAVADATLAYHKKSSIEYIPFPDKLKGRYQAFTQADLTNLRNAGYDKPFKTVAEGVTEYMAWLNRDA</sequence>
<name>HLDD_SALEP</name>
<gene>
    <name evidence="1" type="primary">hldD</name>
    <name type="ordered locus">SEN3532</name>
</gene>
<organism>
    <name type="scientific">Salmonella enteritidis PT4 (strain P125109)</name>
    <dbReference type="NCBI Taxonomy" id="550537"/>
    <lineage>
        <taxon>Bacteria</taxon>
        <taxon>Pseudomonadati</taxon>
        <taxon>Pseudomonadota</taxon>
        <taxon>Gammaproteobacteria</taxon>
        <taxon>Enterobacterales</taxon>
        <taxon>Enterobacteriaceae</taxon>
        <taxon>Salmonella</taxon>
    </lineage>
</organism>
<comment type="function">
    <text evidence="1">Catalyzes the interconversion between ADP-D-glycero-beta-D-manno-heptose and ADP-L-glycero-beta-D-manno-heptose via an epimerization at carbon 6 of the heptose.</text>
</comment>
<comment type="catalytic activity">
    <reaction evidence="1">
        <text>ADP-D-glycero-beta-D-manno-heptose = ADP-L-glycero-beta-D-manno-heptose</text>
        <dbReference type="Rhea" id="RHEA:17577"/>
        <dbReference type="ChEBI" id="CHEBI:59967"/>
        <dbReference type="ChEBI" id="CHEBI:61506"/>
        <dbReference type="EC" id="5.1.3.20"/>
    </reaction>
</comment>
<comment type="cofactor">
    <cofactor evidence="1">
        <name>NADP(+)</name>
        <dbReference type="ChEBI" id="CHEBI:58349"/>
    </cofactor>
    <text evidence="1">Binds 1 NADP(+) per subunit.</text>
</comment>
<comment type="pathway">
    <text evidence="1">Nucleotide-sugar biosynthesis; ADP-L-glycero-beta-D-manno-heptose biosynthesis; ADP-L-glycero-beta-D-manno-heptose from D-glycero-beta-D-manno-heptose 7-phosphate: step 4/4.</text>
</comment>
<comment type="subunit">
    <text evidence="1">Homopentamer.</text>
</comment>
<comment type="domain">
    <text evidence="1">Contains a large N-terminal NADP-binding domain, and a smaller C-terminal substrate-binding domain.</text>
</comment>
<comment type="similarity">
    <text evidence="1">Belongs to the NAD(P)-dependent epimerase/dehydratase family. HldD subfamily.</text>
</comment>
<feature type="chain" id="PRO_1000190410" description="ADP-L-glycero-D-manno-heptose-6-epimerase">
    <location>
        <begin position="1"/>
        <end position="310"/>
    </location>
</feature>
<feature type="active site" description="Proton acceptor" evidence="1">
    <location>
        <position position="140"/>
    </location>
</feature>
<feature type="active site" description="Proton acceptor" evidence="1">
    <location>
        <position position="178"/>
    </location>
</feature>
<feature type="binding site" evidence="1">
    <location>
        <begin position="10"/>
        <end position="11"/>
    </location>
    <ligand>
        <name>NADP(+)</name>
        <dbReference type="ChEBI" id="CHEBI:58349"/>
    </ligand>
</feature>
<feature type="binding site" evidence="1">
    <location>
        <begin position="31"/>
        <end position="32"/>
    </location>
    <ligand>
        <name>NADP(+)</name>
        <dbReference type="ChEBI" id="CHEBI:58349"/>
    </ligand>
</feature>
<feature type="binding site" evidence="1">
    <location>
        <position position="38"/>
    </location>
    <ligand>
        <name>NADP(+)</name>
        <dbReference type="ChEBI" id="CHEBI:58349"/>
    </ligand>
</feature>
<feature type="binding site" evidence="1">
    <location>
        <position position="53"/>
    </location>
    <ligand>
        <name>NADP(+)</name>
        <dbReference type="ChEBI" id="CHEBI:58349"/>
    </ligand>
</feature>
<feature type="binding site" evidence="1">
    <location>
        <begin position="75"/>
        <end position="79"/>
    </location>
    <ligand>
        <name>NADP(+)</name>
        <dbReference type="ChEBI" id="CHEBI:58349"/>
    </ligand>
</feature>
<feature type="binding site" evidence="1">
    <location>
        <position position="92"/>
    </location>
    <ligand>
        <name>NADP(+)</name>
        <dbReference type="ChEBI" id="CHEBI:58349"/>
    </ligand>
</feature>
<feature type="binding site" evidence="1">
    <location>
        <position position="144"/>
    </location>
    <ligand>
        <name>NADP(+)</name>
        <dbReference type="ChEBI" id="CHEBI:58349"/>
    </ligand>
</feature>
<feature type="binding site" evidence="1">
    <location>
        <position position="169"/>
    </location>
    <ligand>
        <name>substrate</name>
    </ligand>
</feature>
<feature type="binding site" evidence="1">
    <location>
        <position position="170"/>
    </location>
    <ligand>
        <name>NADP(+)</name>
        <dbReference type="ChEBI" id="CHEBI:58349"/>
    </ligand>
</feature>
<feature type="binding site" evidence="1">
    <location>
        <position position="178"/>
    </location>
    <ligand>
        <name>NADP(+)</name>
        <dbReference type="ChEBI" id="CHEBI:58349"/>
    </ligand>
</feature>
<feature type="binding site" evidence="1">
    <location>
        <position position="180"/>
    </location>
    <ligand>
        <name>substrate</name>
    </ligand>
</feature>
<feature type="binding site" evidence="1">
    <location>
        <position position="187"/>
    </location>
    <ligand>
        <name>substrate</name>
    </ligand>
</feature>
<feature type="binding site" evidence="1">
    <location>
        <begin position="201"/>
        <end position="204"/>
    </location>
    <ligand>
        <name>substrate</name>
    </ligand>
</feature>
<feature type="binding site" evidence="1">
    <location>
        <position position="209"/>
    </location>
    <ligand>
        <name>substrate</name>
    </ligand>
</feature>
<feature type="binding site" evidence="1">
    <location>
        <position position="272"/>
    </location>
    <ligand>
        <name>substrate</name>
    </ligand>
</feature>